<dbReference type="EC" id="1.7.1.7" evidence="1"/>
<dbReference type="EMBL" id="L35304">
    <property type="protein sequence ID" value="AAA52503.1"/>
    <property type="molecule type" value="Genomic_DNA"/>
</dbReference>
<dbReference type="EMBL" id="M27941">
    <property type="protein sequence ID" value="AAA53106.1"/>
    <property type="molecule type" value="Genomic_DNA"/>
</dbReference>
<dbReference type="EMBL" id="M24470">
    <property type="protein sequence ID" value="AAA52498.1"/>
    <property type="molecule type" value="mRNA"/>
</dbReference>
<dbReference type="EMBL" id="AL009031">
    <property type="status" value="NOT_ANNOTATED_CDS"/>
    <property type="molecule type" value="Genomic_DNA"/>
</dbReference>
<dbReference type="EMBL" id="AL138883">
    <property type="status" value="NOT_ANNOTATED_CDS"/>
    <property type="molecule type" value="Genomic_DNA"/>
</dbReference>
<dbReference type="EMBL" id="BC008281">
    <property type="protein sequence ID" value="AAH08281.1"/>
    <property type="molecule type" value="mRNA"/>
</dbReference>
<dbReference type="CCDS" id="CCDS4537.1"/>
<dbReference type="PIR" id="B32902">
    <property type="entry name" value="B32902"/>
</dbReference>
<dbReference type="RefSeq" id="NP_006868.3">
    <property type="nucleotide sequence ID" value="NM_006877.3"/>
</dbReference>
<dbReference type="PDB" id="2BLE">
    <property type="method" value="X-ray"/>
    <property type="resolution" value="1.90 A"/>
    <property type="chains" value="A=1-345"/>
</dbReference>
<dbReference type="PDB" id="2BWG">
    <property type="method" value="X-ray"/>
    <property type="resolution" value="2.40 A"/>
    <property type="chains" value="A/B/C/D=1-345"/>
</dbReference>
<dbReference type="PDBsum" id="2BLE"/>
<dbReference type="PDBsum" id="2BWG"/>
<dbReference type="SMR" id="P36959"/>
<dbReference type="BioGRID" id="109028">
    <property type="interactions" value="10"/>
</dbReference>
<dbReference type="FunCoup" id="P36959">
    <property type="interactions" value="709"/>
</dbReference>
<dbReference type="IntAct" id="P36959">
    <property type="interactions" value="3"/>
</dbReference>
<dbReference type="STRING" id="9606.ENSP00000259727"/>
<dbReference type="DrugBank" id="DB01972">
    <property type="generic name" value="Guanosine-5'-Monophosphate"/>
</dbReference>
<dbReference type="iPTMnet" id="P36959"/>
<dbReference type="PhosphoSitePlus" id="P36959"/>
<dbReference type="BioMuta" id="GMPR"/>
<dbReference type="DMDM" id="544455"/>
<dbReference type="jPOST" id="P36959"/>
<dbReference type="MassIVE" id="P36959"/>
<dbReference type="PaxDb" id="9606-ENSP00000259727"/>
<dbReference type="PeptideAtlas" id="P36959"/>
<dbReference type="ProteomicsDB" id="55249"/>
<dbReference type="Pumba" id="P36959"/>
<dbReference type="Antibodypedia" id="10292">
    <property type="antibodies" value="161 antibodies from 21 providers"/>
</dbReference>
<dbReference type="DNASU" id="2766"/>
<dbReference type="Ensembl" id="ENST00000259727.5">
    <property type="protein sequence ID" value="ENSP00000259727.4"/>
    <property type="gene ID" value="ENSG00000137198.10"/>
</dbReference>
<dbReference type="GeneID" id="2766"/>
<dbReference type="KEGG" id="hsa:2766"/>
<dbReference type="MANE-Select" id="ENST00000259727.5">
    <property type="protein sequence ID" value="ENSP00000259727.4"/>
    <property type="RefSeq nucleotide sequence ID" value="NM_006877.4"/>
    <property type="RefSeq protein sequence ID" value="NP_006868.3"/>
</dbReference>
<dbReference type="UCSC" id="uc003nbs.3">
    <property type="organism name" value="human"/>
</dbReference>
<dbReference type="AGR" id="HGNC:4376"/>
<dbReference type="CTD" id="2766"/>
<dbReference type="DisGeNET" id="2766"/>
<dbReference type="GeneCards" id="GMPR"/>
<dbReference type="HGNC" id="HGNC:4376">
    <property type="gene designation" value="GMPR"/>
</dbReference>
<dbReference type="HPA" id="ENSG00000137198">
    <property type="expression patterns" value="Tissue enhanced (skeletal muscle, tongue)"/>
</dbReference>
<dbReference type="MIM" id="139265">
    <property type="type" value="gene"/>
</dbReference>
<dbReference type="neXtProt" id="NX_P36959"/>
<dbReference type="OpenTargets" id="ENSG00000137198"/>
<dbReference type="PharmGKB" id="PA28761"/>
<dbReference type="VEuPathDB" id="HostDB:ENSG00000137198"/>
<dbReference type="eggNOG" id="KOG2550">
    <property type="taxonomic scope" value="Eukaryota"/>
</dbReference>
<dbReference type="GeneTree" id="ENSGT00940000156595"/>
<dbReference type="HOGENOM" id="CLU_022552_5_3_1"/>
<dbReference type="InParanoid" id="P36959"/>
<dbReference type="OMA" id="AYKEYFG"/>
<dbReference type="OrthoDB" id="418595at2759"/>
<dbReference type="PAN-GO" id="P36959">
    <property type="GO annotations" value="0 GO annotations based on evolutionary models"/>
</dbReference>
<dbReference type="PhylomeDB" id="P36959"/>
<dbReference type="TreeFam" id="TF300378"/>
<dbReference type="BRENDA" id="1.7.1.7">
    <property type="organism ID" value="2681"/>
</dbReference>
<dbReference type="PathwayCommons" id="P36959"/>
<dbReference type="Reactome" id="R-HSA-74217">
    <property type="pathway name" value="Purine salvage"/>
</dbReference>
<dbReference type="Reactome" id="R-HSA-9854909">
    <property type="pathway name" value="Regulation of MITF-M dependent genes involved in invasion"/>
</dbReference>
<dbReference type="SignaLink" id="P36959"/>
<dbReference type="BioGRID-ORCS" id="2766">
    <property type="hits" value="6 hits in 1161 CRISPR screens"/>
</dbReference>
<dbReference type="ChiTaRS" id="GMPR">
    <property type="organism name" value="human"/>
</dbReference>
<dbReference type="EvolutionaryTrace" id="P36959"/>
<dbReference type="GenomeRNAi" id="2766"/>
<dbReference type="Pharos" id="P36959">
    <property type="development level" value="Tbio"/>
</dbReference>
<dbReference type="PRO" id="PR:P36959"/>
<dbReference type="Proteomes" id="UP000005640">
    <property type="component" value="Chromosome 6"/>
</dbReference>
<dbReference type="RNAct" id="P36959">
    <property type="molecule type" value="protein"/>
</dbReference>
<dbReference type="Bgee" id="ENSG00000137198">
    <property type="expression patterns" value="Expressed in gastrocnemius and 171 other cell types or tissues"/>
</dbReference>
<dbReference type="GO" id="GO:0005829">
    <property type="term" value="C:cytosol"/>
    <property type="evidence" value="ECO:0000304"/>
    <property type="project" value="Reactome"/>
</dbReference>
<dbReference type="GO" id="GO:1902560">
    <property type="term" value="C:GMP reductase complex"/>
    <property type="evidence" value="ECO:0007669"/>
    <property type="project" value="InterPro"/>
</dbReference>
<dbReference type="GO" id="GO:0003920">
    <property type="term" value="F:GMP reductase activity"/>
    <property type="evidence" value="ECO:0000314"/>
    <property type="project" value="MGI"/>
</dbReference>
<dbReference type="GO" id="GO:0046872">
    <property type="term" value="F:metal ion binding"/>
    <property type="evidence" value="ECO:0007669"/>
    <property type="project" value="UniProtKB-KW"/>
</dbReference>
<dbReference type="GO" id="GO:0006144">
    <property type="term" value="P:purine nucleobase metabolic process"/>
    <property type="evidence" value="ECO:0007669"/>
    <property type="project" value="UniProtKB-KW"/>
</dbReference>
<dbReference type="GO" id="GO:0006163">
    <property type="term" value="P:purine nucleotide metabolic process"/>
    <property type="evidence" value="ECO:0007669"/>
    <property type="project" value="UniProtKB-UniRule"/>
</dbReference>
<dbReference type="GO" id="GO:0009409">
    <property type="term" value="P:response to cold"/>
    <property type="evidence" value="ECO:0000304"/>
    <property type="project" value="ProtInc"/>
</dbReference>
<dbReference type="CDD" id="cd00381">
    <property type="entry name" value="IMPDH"/>
    <property type="match status" value="1"/>
</dbReference>
<dbReference type="FunFam" id="3.20.20.70:FF:000012">
    <property type="entry name" value="GMP reductase"/>
    <property type="match status" value="1"/>
</dbReference>
<dbReference type="Gene3D" id="3.20.20.70">
    <property type="entry name" value="Aldolase class I"/>
    <property type="match status" value="1"/>
</dbReference>
<dbReference type="HAMAP" id="MF_00596">
    <property type="entry name" value="GMP_reduct_type1"/>
    <property type="match status" value="1"/>
</dbReference>
<dbReference type="InterPro" id="IPR013785">
    <property type="entry name" value="Aldolase_TIM"/>
</dbReference>
<dbReference type="InterPro" id="IPR050139">
    <property type="entry name" value="GMP_reductase"/>
</dbReference>
<dbReference type="InterPro" id="IPR005993">
    <property type="entry name" value="GMPR"/>
</dbReference>
<dbReference type="InterPro" id="IPR015875">
    <property type="entry name" value="IMP_DH/GMP_Rdtase_CS"/>
</dbReference>
<dbReference type="InterPro" id="IPR001093">
    <property type="entry name" value="IMP_DH_GMPRt"/>
</dbReference>
<dbReference type="NCBIfam" id="TIGR01305">
    <property type="entry name" value="GMP_reduct_1"/>
    <property type="match status" value="1"/>
</dbReference>
<dbReference type="NCBIfam" id="NF003470">
    <property type="entry name" value="PRK05096.1"/>
    <property type="match status" value="1"/>
</dbReference>
<dbReference type="PANTHER" id="PTHR43170">
    <property type="entry name" value="GMP REDUCTASE"/>
    <property type="match status" value="1"/>
</dbReference>
<dbReference type="PANTHER" id="PTHR43170:SF3">
    <property type="entry name" value="GMP REDUCTASE 1"/>
    <property type="match status" value="1"/>
</dbReference>
<dbReference type="Pfam" id="PF00478">
    <property type="entry name" value="IMPDH"/>
    <property type="match status" value="1"/>
</dbReference>
<dbReference type="PIRSF" id="PIRSF000235">
    <property type="entry name" value="GMP_reductase"/>
    <property type="match status" value="1"/>
</dbReference>
<dbReference type="SMART" id="SM01240">
    <property type="entry name" value="IMPDH"/>
    <property type="match status" value="1"/>
</dbReference>
<dbReference type="SUPFAM" id="SSF51412">
    <property type="entry name" value="Inosine monophosphate dehydrogenase (IMPDH)"/>
    <property type="match status" value="1"/>
</dbReference>
<dbReference type="PROSITE" id="PS00487">
    <property type="entry name" value="IMP_DH_GMP_RED"/>
    <property type="match status" value="1"/>
</dbReference>
<reference key="1">
    <citation type="journal article" date="1989" name="Cell">
        <title>Two structural genes on different chromosomes are required for encoding the major subunit of human red cell glucose-6-phosphate dehydrogenase.</title>
        <authorList>
            <person name="Kanno H."/>
            <person name="Huang I.Y."/>
            <person name="Kan Y.W."/>
            <person name="Yoshida A."/>
        </authorList>
    </citation>
    <scope>NUCLEOTIDE SEQUENCE [GENOMIC DNA / MRNA]</scope>
</reference>
<reference key="2">
    <citation type="journal article" date="1991" name="Hum. Genet.">
        <title>Genomic structure and expression of human guanosine monophosphate reductase.</title>
        <authorList>
            <person name="Kondoh T."/>
            <person name="Kanno H."/>
            <person name="Chang L."/>
            <person name="Yoshida A."/>
        </authorList>
    </citation>
    <scope>NUCLEOTIDE SEQUENCE [MRNA]</scope>
</reference>
<reference key="3">
    <citation type="journal article" date="2003" name="Nature">
        <title>The DNA sequence and analysis of human chromosome 6.</title>
        <authorList>
            <person name="Mungall A.J."/>
            <person name="Palmer S.A."/>
            <person name="Sims S.K."/>
            <person name="Edwards C.A."/>
            <person name="Ashurst J.L."/>
            <person name="Wilming L."/>
            <person name="Jones M.C."/>
            <person name="Horton R."/>
            <person name="Hunt S.E."/>
            <person name="Scott C.E."/>
            <person name="Gilbert J.G.R."/>
            <person name="Clamp M.E."/>
            <person name="Bethel G."/>
            <person name="Milne S."/>
            <person name="Ainscough R."/>
            <person name="Almeida J.P."/>
            <person name="Ambrose K.D."/>
            <person name="Andrews T.D."/>
            <person name="Ashwell R.I.S."/>
            <person name="Babbage A.K."/>
            <person name="Bagguley C.L."/>
            <person name="Bailey J."/>
            <person name="Banerjee R."/>
            <person name="Barker D.J."/>
            <person name="Barlow K.F."/>
            <person name="Bates K."/>
            <person name="Beare D.M."/>
            <person name="Beasley H."/>
            <person name="Beasley O."/>
            <person name="Bird C.P."/>
            <person name="Blakey S.E."/>
            <person name="Bray-Allen S."/>
            <person name="Brook J."/>
            <person name="Brown A.J."/>
            <person name="Brown J.Y."/>
            <person name="Burford D.C."/>
            <person name="Burrill W."/>
            <person name="Burton J."/>
            <person name="Carder C."/>
            <person name="Carter N.P."/>
            <person name="Chapman J.C."/>
            <person name="Clark S.Y."/>
            <person name="Clark G."/>
            <person name="Clee C.M."/>
            <person name="Clegg S."/>
            <person name="Cobley V."/>
            <person name="Collier R.E."/>
            <person name="Collins J.E."/>
            <person name="Colman L.K."/>
            <person name="Corby N.R."/>
            <person name="Coville G.J."/>
            <person name="Culley K.M."/>
            <person name="Dhami P."/>
            <person name="Davies J."/>
            <person name="Dunn M."/>
            <person name="Earthrowl M.E."/>
            <person name="Ellington A.E."/>
            <person name="Evans K.A."/>
            <person name="Faulkner L."/>
            <person name="Francis M.D."/>
            <person name="Frankish A."/>
            <person name="Frankland J."/>
            <person name="French L."/>
            <person name="Garner P."/>
            <person name="Garnett J."/>
            <person name="Ghori M.J."/>
            <person name="Gilby L.M."/>
            <person name="Gillson C.J."/>
            <person name="Glithero R.J."/>
            <person name="Grafham D.V."/>
            <person name="Grant M."/>
            <person name="Gribble S."/>
            <person name="Griffiths C."/>
            <person name="Griffiths M.N.D."/>
            <person name="Hall R."/>
            <person name="Halls K.S."/>
            <person name="Hammond S."/>
            <person name="Harley J.L."/>
            <person name="Hart E.A."/>
            <person name="Heath P.D."/>
            <person name="Heathcott R."/>
            <person name="Holmes S.J."/>
            <person name="Howden P.J."/>
            <person name="Howe K.L."/>
            <person name="Howell G.R."/>
            <person name="Huckle E."/>
            <person name="Humphray S.J."/>
            <person name="Humphries M.D."/>
            <person name="Hunt A.R."/>
            <person name="Johnson C.M."/>
            <person name="Joy A.A."/>
            <person name="Kay M."/>
            <person name="Keenan S.J."/>
            <person name="Kimberley A.M."/>
            <person name="King A."/>
            <person name="Laird G.K."/>
            <person name="Langford C."/>
            <person name="Lawlor S."/>
            <person name="Leongamornlert D.A."/>
            <person name="Leversha M."/>
            <person name="Lloyd C.R."/>
            <person name="Lloyd D.M."/>
            <person name="Loveland J.E."/>
            <person name="Lovell J."/>
            <person name="Martin S."/>
            <person name="Mashreghi-Mohammadi M."/>
            <person name="Maslen G.L."/>
            <person name="Matthews L."/>
            <person name="McCann O.T."/>
            <person name="McLaren S.J."/>
            <person name="McLay K."/>
            <person name="McMurray A."/>
            <person name="Moore M.J.F."/>
            <person name="Mullikin J.C."/>
            <person name="Niblett D."/>
            <person name="Nickerson T."/>
            <person name="Novik K.L."/>
            <person name="Oliver K."/>
            <person name="Overton-Larty E.K."/>
            <person name="Parker A."/>
            <person name="Patel R."/>
            <person name="Pearce A.V."/>
            <person name="Peck A.I."/>
            <person name="Phillimore B.J.C.T."/>
            <person name="Phillips S."/>
            <person name="Plumb R.W."/>
            <person name="Porter K.M."/>
            <person name="Ramsey Y."/>
            <person name="Ranby S.A."/>
            <person name="Rice C.M."/>
            <person name="Ross M.T."/>
            <person name="Searle S.M."/>
            <person name="Sehra H.K."/>
            <person name="Sheridan E."/>
            <person name="Skuce C.D."/>
            <person name="Smith S."/>
            <person name="Smith M."/>
            <person name="Spraggon L."/>
            <person name="Squares S.L."/>
            <person name="Steward C.A."/>
            <person name="Sycamore N."/>
            <person name="Tamlyn-Hall G."/>
            <person name="Tester J."/>
            <person name="Theaker A.J."/>
            <person name="Thomas D.W."/>
            <person name="Thorpe A."/>
            <person name="Tracey A."/>
            <person name="Tromans A."/>
            <person name="Tubby B."/>
            <person name="Wall M."/>
            <person name="Wallis J.M."/>
            <person name="West A.P."/>
            <person name="White S.S."/>
            <person name="Whitehead S.L."/>
            <person name="Whittaker H."/>
            <person name="Wild A."/>
            <person name="Willey D.J."/>
            <person name="Wilmer T.E."/>
            <person name="Wood J.M."/>
            <person name="Wray P.W."/>
            <person name="Wyatt J.C."/>
            <person name="Young L."/>
            <person name="Younger R.M."/>
            <person name="Bentley D.R."/>
            <person name="Coulson A."/>
            <person name="Durbin R.M."/>
            <person name="Hubbard T."/>
            <person name="Sulston J.E."/>
            <person name="Dunham I."/>
            <person name="Rogers J."/>
            <person name="Beck S."/>
        </authorList>
    </citation>
    <scope>NUCLEOTIDE SEQUENCE [LARGE SCALE GENOMIC DNA]</scope>
</reference>
<reference key="4">
    <citation type="journal article" date="2004" name="Genome Res.">
        <title>The status, quality, and expansion of the NIH full-length cDNA project: the Mammalian Gene Collection (MGC).</title>
        <authorList>
            <consortium name="The MGC Project Team"/>
        </authorList>
    </citation>
    <scope>NUCLEOTIDE SEQUENCE [LARGE SCALE MRNA]</scope>
    <scope>VARIANT ILE-256</scope>
    <source>
        <tissue>Placenta</tissue>
    </source>
</reference>
<reference key="5">
    <citation type="journal article" date="1989" name="Cell">
        <title>The human mRNA that provides the N-terminus of chimeric G6PD encodes GMP reductase.</title>
        <authorList>
            <person name="Henikoff S."/>
            <person name="Smith J.M."/>
        </authorList>
    </citation>
    <scope>SIMILARITY TO GMP REDUCTASE</scope>
</reference>
<reference key="6">
    <citation type="journal article" date="1990" name="Cell">
        <title>Origin of 'fused' glucose-6-phosphate dehydrogenase.</title>
        <authorList>
            <person name="Yoshida A."/>
            <person name="Kan Y.W."/>
        </authorList>
    </citation>
    <scope>LACK OF ROLE IN G6PD</scope>
</reference>
<reference key="7">
    <citation type="journal article" date="2011" name="BMC Syst. Biol.">
        <title>Initial characterization of the human central proteome.</title>
        <authorList>
            <person name="Burkard T.R."/>
            <person name="Planyavsky M."/>
            <person name="Kaupe I."/>
            <person name="Breitwieser F.P."/>
            <person name="Buerckstuemmer T."/>
            <person name="Bennett K.L."/>
            <person name="Superti-Furga G."/>
            <person name="Colinge J."/>
        </authorList>
    </citation>
    <scope>IDENTIFICATION BY MASS SPECTROMETRY [LARGE SCALE ANALYSIS]</scope>
</reference>
<reference key="8">
    <citation type="submission" date="2005-07" db="PDB data bank">
        <title>Structure of human guanosine monophosphate reductase GMPR1 in complex with GMP.</title>
        <authorList>
            <consortium name="Structural genomics consortium (SGC)"/>
        </authorList>
    </citation>
    <scope>X-RAY CRYSTALLOGRAPHY (1.90 ANGSTROMS) IN COMPLEX WITH GMP AND POTASSIUM IONS</scope>
</reference>
<reference key="9">
    <citation type="journal article" date="1991" name="Hum. Genet.">
        <title>Identification of common variant alleles of the human guanosine monophosphate reductase gene.</title>
        <authorList>
            <person name="Kondoh T."/>
            <person name="Kanno H."/>
            <person name="Chang L."/>
            <person name="Yoshida A."/>
        </authorList>
    </citation>
    <scope>VARIANTS THR-234 AND ILE-256</scope>
</reference>
<comment type="function">
    <text evidence="1">Catalyzes the irreversible NADPH-dependent deamination of GMP to IMP. It functions in the conversion of nucleobase, nucleoside and nucleotide derivatives of G to A nucleotides, and in maintaining the intracellular balance of A and G nucleotides.</text>
</comment>
<comment type="catalytic activity">
    <reaction evidence="1">
        <text>IMP + NH4(+) + NADP(+) = GMP + NADPH + 2 H(+)</text>
        <dbReference type="Rhea" id="RHEA:17185"/>
        <dbReference type="ChEBI" id="CHEBI:15378"/>
        <dbReference type="ChEBI" id="CHEBI:28938"/>
        <dbReference type="ChEBI" id="CHEBI:57783"/>
        <dbReference type="ChEBI" id="CHEBI:58053"/>
        <dbReference type="ChEBI" id="CHEBI:58115"/>
        <dbReference type="ChEBI" id="CHEBI:58349"/>
        <dbReference type="EC" id="1.7.1.7"/>
    </reaction>
</comment>
<comment type="subunit">
    <text evidence="1 4">Homotetramer.</text>
</comment>
<comment type="interaction">
    <interactant intactId="EBI-10484590">
        <id>P36959</id>
    </interactant>
    <interactant intactId="EBI-2806548">
        <id>Q9P2T1</id>
        <label>GMPR2</label>
    </interactant>
    <organismsDiffer>false</organismsDiffer>
    <experiments>2</experiments>
</comment>
<comment type="polymorphism">
    <text>At least two different alleles are known.</text>
</comment>
<comment type="similarity">
    <text evidence="1">Belongs to the IMPDH/GMPR family. GuaC type 1 subfamily.</text>
</comment>
<comment type="caution">
    <text evidence="5">The N-terminus was initially (PubMed:2758468) thought to be fused with glucose-6-phosphate-dehydrogenase (G6PD) protein in vivo. However, PubMed:2570640 showed that it encodes a GMP reductase, and PubMed:1694726 showed that the chimeric protein is an artifact.</text>
</comment>
<evidence type="ECO:0000255" key="1">
    <source>
        <dbReference type="HAMAP-Rule" id="MF_03195"/>
    </source>
</evidence>
<evidence type="ECO:0000269" key="2">
    <source>
    </source>
</evidence>
<evidence type="ECO:0000269" key="3">
    <source>
    </source>
</evidence>
<evidence type="ECO:0000269" key="4">
    <source ref="8"/>
</evidence>
<evidence type="ECO:0000305" key="5">
    <source>
    </source>
</evidence>
<evidence type="ECO:0007829" key="6">
    <source>
        <dbReference type="PDB" id="2BLE"/>
    </source>
</evidence>
<evidence type="ECO:0007829" key="7">
    <source>
        <dbReference type="PDB" id="2BWG"/>
    </source>
</evidence>
<proteinExistence type="evidence at protein level"/>
<keyword id="KW-0002">3D-structure</keyword>
<keyword id="KW-0479">Metal-binding</keyword>
<keyword id="KW-0521">NADP</keyword>
<keyword id="KW-0560">Oxidoreductase</keyword>
<keyword id="KW-0630">Potassium</keyword>
<keyword id="KW-1267">Proteomics identification</keyword>
<keyword id="KW-0659">Purine metabolism</keyword>
<keyword id="KW-1185">Reference proteome</keyword>
<feature type="chain" id="PRO_0000093723" description="GMP reductase 1">
    <location>
        <begin position="1"/>
        <end position="345"/>
    </location>
</feature>
<feature type="active site" description="Thioimidate intermediate" evidence="1">
    <location>
        <position position="186"/>
    </location>
</feature>
<feature type="active site" description="Proton donor/acceptor" evidence="1">
    <location>
        <position position="188"/>
    </location>
</feature>
<feature type="binding site" evidence="1">
    <location>
        <begin position="26"/>
        <end position="27"/>
    </location>
    <ligand>
        <name>NADP(+)</name>
        <dbReference type="ChEBI" id="CHEBI:58349"/>
        <note>ligand shared between two neighboring subunits</note>
    </ligand>
</feature>
<feature type="binding site" description="in other chain" evidence="1">
    <location>
        <position position="78"/>
    </location>
    <ligand>
        <name>NADP(+)</name>
        <dbReference type="ChEBI" id="CHEBI:58349"/>
        <note>ligand shared between two neighboring subunits</note>
    </ligand>
</feature>
<feature type="binding site" description="in other chain" evidence="1">
    <location>
        <begin position="129"/>
        <end position="131"/>
    </location>
    <ligand>
        <name>NADP(+)</name>
        <dbReference type="ChEBI" id="CHEBI:58349"/>
        <note>ligand shared between two neighboring subunits</note>
    </ligand>
</feature>
<feature type="binding site" description="in other chain" evidence="1">
    <location>
        <begin position="180"/>
        <end position="181"/>
    </location>
    <ligand>
        <name>NADP(+)</name>
        <dbReference type="ChEBI" id="CHEBI:58349"/>
        <note>ligand shared between two neighboring subunits</note>
    </ligand>
</feature>
<feature type="binding site" evidence="1 4">
    <location>
        <position position="181"/>
    </location>
    <ligand>
        <name>K(+)</name>
        <dbReference type="ChEBI" id="CHEBI:29103"/>
    </ligand>
</feature>
<feature type="binding site" evidence="1 4">
    <location>
        <position position="183"/>
    </location>
    <ligand>
        <name>K(+)</name>
        <dbReference type="ChEBI" id="CHEBI:29103"/>
    </ligand>
</feature>
<feature type="binding site" evidence="1 4">
    <location>
        <position position="186"/>
    </location>
    <ligand>
        <name>K(+)</name>
        <dbReference type="ChEBI" id="CHEBI:29103"/>
    </ligand>
</feature>
<feature type="binding site" evidence="1 4">
    <location>
        <position position="189"/>
    </location>
    <ligand>
        <name>K(+)</name>
        <dbReference type="ChEBI" id="CHEBI:29103"/>
    </ligand>
</feature>
<feature type="binding site" evidence="1 4">
    <location>
        <begin position="219"/>
        <end position="221"/>
    </location>
    <ligand>
        <name>GMP</name>
        <dbReference type="ChEBI" id="CHEBI:58115"/>
    </ligand>
</feature>
<feature type="binding site" evidence="1 4">
    <location>
        <begin position="242"/>
        <end position="243"/>
    </location>
    <ligand>
        <name>GMP</name>
        <dbReference type="ChEBI" id="CHEBI:58115"/>
    </ligand>
</feature>
<feature type="binding site" evidence="1 4">
    <location>
        <begin position="268"/>
        <end position="270"/>
    </location>
    <ligand>
        <name>GMP</name>
        <dbReference type="ChEBI" id="CHEBI:58115"/>
    </ligand>
</feature>
<feature type="binding site" description="in other chain" evidence="1">
    <location>
        <position position="269"/>
    </location>
    <ligand>
        <name>NADP(+)</name>
        <dbReference type="ChEBI" id="CHEBI:58349"/>
        <note>ligand shared between two neighboring subunits</note>
    </ligand>
</feature>
<feature type="binding site" description="in other chain" evidence="1">
    <location>
        <begin position="285"/>
        <end position="286"/>
    </location>
    <ligand>
        <name>NADP(+)</name>
        <dbReference type="ChEBI" id="CHEBI:58349"/>
        <note>ligand shared between two neighboring subunits</note>
    </ligand>
</feature>
<feature type="binding site" evidence="1 4">
    <location>
        <begin position="286"/>
        <end position="290"/>
    </location>
    <ligand>
        <name>GMP</name>
        <dbReference type="ChEBI" id="CHEBI:58115"/>
    </ligand>
</feature>
<feature type="binding site" evidence="1">
    <location>
        <begin position="314"/>
        <end position="317"/>
    </location>
    <ligand>
        <name>NADP(+)</name>
        <dbReference type="ChEBI" id="CHEBI:58349"/>
        <note>ligand shared between two neighboring subunits</note>
    </ligand>
</feature>
<feature type="sequence variant" id="VAR_003969" description="In dbSNP:rs760571328." evidence="3">
    <original>A</original>
    <variation>T</variation>
    <location>
        <position position="234"/>
    </location>
</feature>
<feature type="sequence variant" id="VAR_003970" description="In dbSNP:rs1042391." evidence="2 3">
    <original>F</original>
    <variation>I</variation>
    <location>
        <position position="256"/>
    </location>
</feature>
<feature type="strand" evidence="7">
    <location>
        <begin position="3"/>
        <end position="8"/>
    </location>
</feature>
<feature type="helix" evidence="6">
    <location>
        <begin position="12"/>
        <end position="14"/>
    </location>
</feature>
<feature type="strand" evidence="6">
    <location>
        <begin position="15"/>
        <end position="17"/>
    </location>
</feature>
<feature type="helix" evidence="6">
    <location>
        <begin position="27"/>
        <end position="29"/>
    </location>
</feature>
<feature type="strand" evidence="6">
    <location>
        <begin position="34"/>
        <end position="37"/>
    </location>
</feature>
<feature type="turn" evidence="6">
    <location>
        <begin position="39"/>
        <end position="41"/>
    </location>
</feature>
<feature type="strand" evidence="6">
    <location>
        <begin position="44"/>
        <end position="47"/>
    </location>
</feature>
<feature type="strand" evidence="6">
    <location>
        <begin position="50"/>
        <end position="52"/>
    </location>
</feature>
<feature type="turn" evidence="6">
    <location>
        <begin position="56"/>
        <end position="58"/>
    </location>
</feature>
<feature type="helix" evidence="6">
    <location>
        <begin position="61"/>
        <end position="67"/>
    </location>
</feature>
<feature type="helix" evidence="6">
    <location>
        <begin position="68"/>
        <end position="70"/>
    </location>
</feature>
<feature type="strand" evidence="6">
    <location>
        <begin position="73"/>
        <end position="75"/>
    </location>
</feature>
<feature type="helix" evidence="6">
    <location>
        <begin position="82"/>
        <end position="91"/>
    </location>
</feature>
<feature type="helix" evidence="6">
    <location>
        <begin position="93"/>
        <end position="98"/>
    </location>
</feature>
<feature type="strand" evidence="6">
    <location>
        <begin position="99"/>
        <end position="103"/>
    </location>
</feature>
<feature type="helix" evidence="6">
    <location>
        <begin position="107"/>
        <end position="119"/>
    </location>
</feature>
<feature type="strand" evidence="6">
    <location>
        <begin position="125"/>
        <end position="129"/>
    </location>
</feature>
<feature type="helix" evidence="6">
    <location>
        <begin position="136"/>
        <end position="148"/>
    </location>
</feature>
<feature type="strand" evidence="6">
    <location>
        <begin position="152"/>
        <end position="159"/>
    </location>
</feature>
<feature type="helix" evidence="6">
    <location>
        <begin position="162"/>
        <end position="170"/>
    </location>
</feature>
<feature type="strand" evidence="6">
    <location>
        <begin position="174"/>
        <end position="178"/>
    </location>
</feature>
<feature type="helix" evidence="6">
    <location>
        <begin position="188"/>
        <end position="191"/>
    </location>
</feature>
<feature type="helix" evidence="6">
    <location>
        <begin position="198"/>
        <end position="210"/>
    </location>
</feature>
<feature type="turn" evidence="6">
    <location>
        <begin position="211"/>
        <end position="213"/>
    </location>
</feature>
<feature type="strand" evidence="6">
    <location>
        <begin position="215"/>
        <end position="220"/>
    </location>
</feature>
<feature type="helix" evidence="6">
    <location>
        <begin position="225"/>
        <end position="234"/>
    </location>
</feature>
<feature type="strand" evidence="6">
    <location>
        <begin position="237"/>
        <end position="242"/>
    </location>
</feature>
<feature type="helix" evidence="6">
    <location>
        <begin position="243"/>
        <end position="245"/>
    </location>
</feature>
<feature type="strand" evidence="6">
    <location>
        <begin position="251"/>
        <end position="253"/>
    </location>
</feature>
<feature type="strand" evidence="6">
    <location>
        <begin position="263"/>
        <end position="267"/>
    </location>
</feature>
<feature type="helix" evidence="6">
    <location>
        <begin position="272"/>
        <end position="277"/>
    </location>
</feature>
<feature type="strand" evidence="6">
    <location>
        <begin position="285"/>
        <end position="288"/>
    </location>
</feature>
<feature type="strand" evidence="6">
    <location>
        <begin position="292"/>
        <end position="296"/>
    </location>
</feature>
<feature type="helix" evidence="6">
    <location>
        <begin position="301"/>
        <end position="319"/>
    </location>
</feature>
<feature type="helix" evidence="6">
    <location>
        <begin position="324"/>
        <end position="326"/>
    </location>
</feature>
<feature type="helix" evidence="6">
    <location>
        <begin position="327"/>
        <end position="330"/>
    </location>
</feature>
<feature type="strand" evidence="6">
    <location>
        <begin position="333"/>
        <end position="335"/>
    </location>
</feature>
<accession>P36959</accession>
<accession>Q96HQ6</accession>
<protein>
    <recommendedName>
        <fullName evidence="1">GMP reductase 1</fullName>
        <shortName evidence="1">GMPR 1</shortName>
        <ecNumber evidence="1">1.7.1.7</ecNumber>
    </recommendedName>
    <alternativeName>
        <fullName evidence="1">Guanosine 5'-monophosphate oxidoreductase 1</fullName>
        <shortName evidence="1">Guanosine monophosphate reductase 1</shortName>
    </alternativeName>
</protein>
<gene>
    <name type="primary">GMPR</name>
    <name evidence="1" type="synonym">GMPR1</name>
</gene>
<organism>
    <name type="scientific">Homo sapiens</name>
    <name type="common">Human</name>
    <dbReference type="NCBI Taxonomy" id="9606"/>
    <lineage>
        <taxon>Eukaryota</taxon>
        <taxon>Metazoa</taxon>
        <taxon>Chordata</taxon>
        <taxon>Craniata</taxon>
        <taxon>Vertebrata</taxon>
        <taxon>Euteleostomi</taxon>
        <taxon>Mammalia</taxon>
        <taxon>Eutheria</taxon>
        <taxon>Euarchontoglires</taxon>
        <taxon>Primates</taxon>
        <taxon>Haplorrhini</taxon>
        <taxon>Catarrhini</taxon>
        <taxon>Hominidae</taxon>
        <taxon>Homo</taxon>
    </lineage>
</organism>
<sequence length="345" mass="37419">MPRIDADLKLDFKDVLLRPKRSSLKSRAEVDLERTFTFRNSKQTYSGIPIIVANMDTVGTFEMAAVMSQHSMFTAIHKHYSLDDWKLFATNHPECLQNVAVSSGSGQNDLEKMTSILEAVPQVKFICLDVANGYSEHFVEFVKLVRAKFPEHTIMAGNVVTGEMVEELILSGADIIKVGVGPGSVCTTRTKTGVGYPQLSAVIECADSAHGLKGHIISDGGCTCPGDVAKAFGAGADFVMLGGMFSGHTECAGEVFERNGRKLKLFYGMSSDTAMNKHAGGVAEYRASEGKTVEVPYKGDVENTILDILGGLRSTCTYVGAAKLKELSRRATFIRVTQQHNTVFS</sequence>
<name>GMPR1_HUMAN</name>